<gene>
    <name evidence="1" type="primary">NS</name>
</gene>
<dbReference type="EMBL" id="AF348198">
    <property type="protein sequence ID" value="AAK51751.1"/>
    <property type="molecule type" value="Genomic_RNA"/>
</dbReference>
<dbReference type="EMBL" id="AF348199">
    <property type="protein sequence ID" value="AAK51753.1"/>
    <property type="molecule type" value="Genomic_RNA"/>
</dbReference>
<dbReference type="EMBL" id="AF348201">
    <property type="protein sequence ID" value="AAK51757.1"/>
    <property type="molecule type" value="Genomic_RNA"/>
</dbReference>
<dbReference type="EMBL" id="AF348200">
    <property type="protein sequence ID" value="AAK51755.1"/>
    <property type="molecule type" value="Genomic_RNA"/>
</dbReference>
<dbReference type="EMBL" id="AF348202">
    <property type="protein sequence ID" value="AAK51759.1"/>
    <property type="molecule type" value="Genomic_RNA"/>
</dbReference>
<dbReference type="EMBL" id="AF348203">
    <property type="protein sequence ID" value="AAK51761.1"/>
    <property type="molecule type" value="Genomic_RNA"/>
</dbReference>
<dbReference type="EMBL" id="AF348204">
    <property type="protein sequence ID" value="AAK51763.1"/>
    <property type="molecule type" value="Genomic_RNA"/>
</dbReference>
<dbReference type="EMBL" id="AF348205">
    <property type="protein sequence ID" value="AAK51765.1"/>
    <property type="molecule type" value="Genomic_RNA"/>
</dbReference>
<dbReference type="EMBL" id="AF348206">
    <property type="protein sequence ID" value="AAK51767.1"/>
    <property type="molecule type" value="Genomic_RNA"/>
</dbReference>
<dbReference type="PDB" id="8Y7M">
    <property type="method" value="EM"/>
    <property type="resolution" value="3.00 A"/>
    <property type="chains" value="I/J=1-121"/>
</dbReference>
<dbReference type="PDB" id="8Y7O">
    <property type="method" value="EM"/>
    <property type="resolution" value="3.00 A"/>
    <property type="chains" value="S/T/U/V/W/X=1-121"/>
</dbReference>
<dbReference type="PDBsum" id="8Y7M"/>
<dbReference type="PDBsum" id="8Y7O"/>
<dbReference type="EMDB" id="EMD-39020"/>
<dbReference type="EMDB" id="EMD-39022"/>
<dbReference type="SMR" id="Q910E4"/>
<dbReference type="Proteomes" id="UP000142359">
    <property type="component" value="Genome"/>
</dbReference>
<dbReference type="GO" id="GO:0042025">
    <property type="term" value="C:host cell nucleus"/>
    <property type="evidence" value="ECO:0007669"/>
    <property type="project" value="UniProtKB-SubCell"/>
</dbReference>
<dbReference type="GO" id="GO:0044423">
    <property type="term" value="C:virion component"/>
    <property type="evidence" value="ECO:0007669"/>
    <property type="project" value="UniProtKB-UniRule"/>
</dbReference>
<dbReference type="GO" id="GO:0039675">
    <property type="term" value="P:exit of virus from host cell nucleus through nuclear pore"/>
    <property type="evidence" value="ECO:0007669"/>
    <property type="project" value="UniProtKB-UniRule"/>
</dbReference>
<dbReference type="Gene3D" id="1.10.287.230">
    <property type="match status" value="1"/>
</dbReference>
<dbReference type="Gene3D" id="1.10.287.10">
    <property type="entry name" value="S15/NS1, RNA-binding"/>
    <property type="match status" value="1"/>
</dbReference>
<dbReference type="HAMAP" id="MF_04067">
    <property type="entry name" value="INFV_NEP"/>
    <property type="match status" value="1"/>
</dbReference>
<dbReference type="InterPro" id="IPR000968">
    <property type="entry name" value="Flu_NS2"/>
</dbReference>
<dbReference type="Pfam" id="PF00601">
    <property type="entry name" value="Flu_NS2"/>
    <property type="match status" value="1"/>
</dbReference>
<dbReference type="SUPFAM" id="SSF101156">
    <property type="entry name" value="Nonstructural protein ns2, Nep, M1-binding domain"/>
    <property type="match status" value="1"/>
</dbReference>
<organism>
    <name type="scientific">Influenza A virus (strain A/Hong Kong/1/1968 H3N2)</name>
    <dbReference type="NCBI Taxonomy" id="506350"/>
    <lineage>
        <taxon>Viruses</taxon>
        <taxon>Riboviria</taxon>
        <taxon>Orthornavirae</taxon>
        <taxon>Negarnaviricota</taxon>
        <taxon>Polyploviricotina</taxon>
        <taxon>Insthoviricetes</taxon>
        <taxon>Articulavirales</taxon>
        <taxon>Orthomyxoviridae</taxon>
        <taxon>Alphainfluenzavirus</taxon>
        <taxon>Alphainfluenzavirus influenzae</taxon>
        <taxon>Influenza A virus</taxon>
    </lineage>
</organism>
<feature type="chain" id="PRO_0000324202" description="Nuclear export protein">
    <location>
        <begin position="1"/>
        <end position="121"/>
    </location>
</feature>
<feature type="short sequence motif" description="Nuclear export signal" evidence="1">
    <location>
        <begin position="12"/>
        <end position="21"/>
    </location>
</feature>
<feature type="short sequence motif" description="Nuclear export signal" evidence="1">
    <location>
        <begin position="85"/>
        <end position="94"/>
    </location>
</feature>
<feature type="sequence variant" description="In strain: Isolate MA20b.">
    <original>K</original>
    <variation>R</variation>
    <location>
        <position position="88"/>
    </location>
</feature>
<feature type="helix" evidence="2">
    <location>
        <begin position="6"/>
        <end position="17"/>
    </location>
</feature>
<feature type="turn" evidence="2">
    <location>
        <begin position="18"/>
        <end position="20"/>
    </location>
</feature>
<feature type="helix" evidence="2">
    <location>
        <begin position="27"/>
        <end position="88"/>
    </location>
</feature>
<feature type="helix" evidence="2">
    <location>
        <begin position="93"/>
        <end position="120"/>
    </location>
</feature>
<protein>
    <recommendedName>
        <fullName evidence="1">Nuclear export protein</fullName>
        <shortName evidence="1">NEP</shortName>
    </recommendedName>
    <alternativeName>
        <fullName evidence="1">Non-structural protein 2</fullName>
        <shortName evidence="1">NS2</shortName>
    </alternativeName>
</protein>
<evidence type="ECO:0000255" key="1">
    <source>
        <dbReference type="HAMAP-Rule" id="MF_04067"/>
    </source>
</evidence>
<evidence type="ECO:0007829" key="2">
    <source>
        <dbReference type="PDB" id="8Y7M"/>
    </source>
</evidence>
<sequence>MDSNTVSSFQDILLRMSKMQLGSSSEDLNGMITQFESLKLYRDSLGEAVMRMGDLHSLQNRNGKWREQLGQKFEEIRWLIEEVRHRLKTTENSFEQITFMQALQLLFEVEQEIRTFSFQLI</sequence>
<name>NEP_I68A4</name>
<reference key="1">
    <citation type="journal article" date="2001" name="Proc. Natl. Acad. Sci. U.S.A.">
        <title>Pattern of mutation in the genome of influenza A virus on adaptation to increased virulence in the mouse lung: identification of functional themes.</title>
        <authorList>
            <person name="Brown E.G."/>
            <person name="Liu H."/>
            <person name="Kit L.C."/>
            <person name="Baird S."/>
            <person name="Nesrallah M."/>
        </authorList>
    </citation>
    <scope>NUCLEOTIDE SEQUENCE [GENOMIC RNA]</scope>
    <source>
        <strain>A/Hong Kong/1/1968</strain>
        <strain>Isolate MA20b</strain>
    </source>
</reference>
<organismHost>
    <name type="scientific">Aves</name>
    <dbReference type="NCBI Taxonomy" id="8782"/>
</organismHost>
<organismHost>
    <name type="scientific">Cetacea</name>
    <name type="common">whales</name>
    <dbReference type="NCBI Taxonomy" id="9721"/>
</organismHost>
<organismHost>
    <name type="scientific">Homo sapiens</name>
    <name type="common">Human</name>
    <dbReference type="NCBI Taxonomy" id="9606"/>
</organismHost>
<organismHost>
    <name type="scientific">Phocidae</name>
    <name type="common">true seals</name>
    <dbReference type="NCBI Taxonomy" id="9709"/>
</organismHost>
<organismHost>
    <name type="scientific">Sus scrofa</name>
    <name type="common">Pig</name>
    <dbReference type="NCBI Taxonomy" id="9823"/>
</organismHost>
<proteinExistence type="evidence at protein level"/>
<comment type="function">
    <text evidence="1">Mediates the nuclear export of encapsidated genomic RNAs (ribonucleoproteins, RNPs). Acts as an adapter between viral RNPs complexes and the nuclear export machinery of the cell. Possesses no intrinsic RNA-binding activity, but includes a C-terminal M1-binding domain. This domain is believed to allow recognition of RNPs bound to the protein M1. Since protein M1 is not available in large quantities before late stages of infection, such an indirect recognition mechanism probably ensures that genomic RNPs are not exported from the host nucleus until sufficient quantities of viral mRNA and progeny genomic RNA have been synthesized. Furthermore, the RNPs enter the host cytoplasm only when associated with the M1 protein that is necessary to guide them to the plasma membrane. May down-regulate viral RNA synthesis when overproduced.</text>
</comment>
<comment type="subunit">
    <text evidence="1">Interacts with protein M1. May interact with host nucleoporin RAB/HRB and exportin XPO1/CRM1.</text>
</comment>
<comment type="subcellular location">
    <subcellularLocation>
        <location evidence="1">Virion</location>
    </subcellularLocation>
    <subcellularLocation>
        <location evidence="1">Host nucleus</location>
    </subcellularLocation>
</comment>
<comment type="alternative products">
    <event type="alternative splicing"/>
    <isoform>
        <id>Q910E4-1</id>
        <name>NEP</name>
        <name>NS2</name>
        <sequence type="displayed"/>
    </isoform>
    <isoform>
        <id>Q91MA0-1</id>
        <name>NS1</name>
        <sequence type="external"/>
    </isoform>
</comment>
<comment type="similarity">
    <text evidence="1">Belongs to the influenza viruses NEP family.</text>
</comment>
<keyword id="KW-0002">3D-structure</keyword>
<keyword id="KW-0025">Alternative splicing</keyword>
<keyword id="KW-1048">Host nucleus</keyword>
<keyword id="KW-0945">Host-virus interaction</keyword>
<keyword id="KW-0813">Transport</keyword>
<keyword id="KW-0946">Virion</keyword>
<accession>Q910E4</accession>
<accession>Q91M98</accession>